<gene>
    <name evidence="1" type="primary">aat</name>
    <name type="ordered locus">Saro_0826</name>
</gene>
<comment type="function">
    <text evidence="1">Functions in the N-end rule pathway of protein degradation where it conjugates Leu, Phe and, less efficiently, Met from aminoacyl-tRNAs to the N-termini of proteins containing an N-terminal arginine or lysine.</text>
</comment>
<comment type="catalytic activity">
    <reaction evidence="1">
        <text>N-terminal L-lysyl-[protein] + L-leucyl-tRNA(Leu) = N-terminal L-leucyl-L-lysyl-[protein] + tRNA(Leu) + H(+)</text>
        <dbReference type="Rhea" id="RHEA:12340"/>
        <dbReference type="Rhea" id="RHEA-COMP:9613"/>
        <dbReference type="Rhea" id="RHEA-COMP:9622"/>
        <dbReference type="Rhea" id="RHEA-COMP:12670"/>
        <dbReference type="Rhea" id="RHEA-COMP:12671"/>
        <dbReference type="ChEBI" id="CHEBI:15378"/>
        <dbReference type="ChEBI" id="CHEBI:65249"/>
        <dbReference type="ChEBI" id="CHEBI:78442"/>
        <dbReference type="ChEBI" id="CHEBI:78494"/>
        <dbReference type="ChEBI" id="CHEBI:133043"/>
        <dbReference type="EC" id="2.3.2.6"/>
    </reaction>
</comment>
<comment type="catalytic activity">
    <reaction evidence="1">
        <text>N-terminal L-arginyl-[protein] + L-leucyl-tRNA(Leu) = N-terminal L-leucyl-L-arginyl-[protein] + tRNA(Leu) + H(+)</text>
        <dbReference type="Rhea" id="RHEA:50416"/>
        <dbReference type="Rhea" id="RHEA-COMP:9613"/>
        <dbReference type="Rhea" id="RHEA-COMP:9622"/>
        <dbReference type="Rhea" id="RHEA-COMP:12672"/>
        <dbReference type="Rhea" id="RHEA-COMP:12673"/>
        <dbReference type="ChEBI" id="CHEBI:15378"/>
        <dbReference type="ChEBI" id="CHEBI:64719"/>
        <dbReference type="ChEBI" id="CHEBI:78442"/>
        <dbReference type="ChEBI" id="CHEBI:78494"/>
        <dbReference type="ChEBI" id="CHEBI:133044"/>
        <dbReference type="EC" id="2.3.2.6"/>
    </reaction>
</comment>
<comment type="catalytic activity">
    <reaction evidence="1">
        <text>L-phenylalanyl-tRNA(Phe) + an N-terminal L-alpha-aminoacyl-[protein] = an N-terminal L-phenylalanyl-L-alpha-aminoacyl-[protein] + tRNA(Phe)</text>
        <dbReference type="Rhea" id="RHEA:43632"/>
        <dbReference type="Rhea" id="RHEA-COMP:9668"/>
        <dbReference type="Rhea" id="RHEA-COMP:9699"/>
        <dbReference type="Rhea" id="RHEA-COMP:10636"/>
        <dbReference type="Rhea" id="RHEA-COMP:10637"/>
        <dbReference type="ChEBI" id="CHEBI:78442"/>
        <dbReference type="ChEBI" id="CHEBI:78531"/>
        <dbReference type="ChEBI" id="CHEBI:78597"/>
        <dbReference type="ChEBI" id="CHEBI:83561"/>
        <dbReference type="EC" id="2.3.2.6"/>
    </reaction>
</comment>
<comment type="subcellular location">
    <subcellularLocation>
        <location evidence="1">Cytoplasm</location>
    </subcellularLocation>
</comment>
<comment type="similarity">
    <text evidence="1">Belongs to the L/F-transferase family.</text>
</comment>
<keyword id="KW-0012">Acyltransferase</keyword>
<keyword id="KW-0963">Cytoplasm</keyword>
<keyword id="KW-1185">Reference proteome</keyword>
<keyword id="KW-0808">Transferase</keyword>
<feature type="chain" id="PRO_0000258072" description="Leucyl/phenylalanyl-tRNA--protein transferase">
    <location>
        <begin position="1"/>
        <end position="263"/>
    </location>
</feature>
<organism>
    <name type="scientific">Novosphingobium aromaticivorans (strain ATCC 700278 / DSM 12444 / CCUG 56034 / CIP 105152 / NBRC 16084 / F199)</name>
    <dbReference type="NCBI Taxonomy" id="279238"/>
    <lineage>
        <taxon>Bacteria</taxon>
        <taxon>Pseudomonadati</taxon>
        <taxon>Pseudomonadota</taxon>
        <taxon>Alphaproteobacteria</taxon>
        <taxon>Sphingomonadales</taxon>
        <taxon>Sphingomonadaceae</taxon>
        <taxon>Novosphingobium</taxon>
    </lineage>
</organism>
<sequence>MSRIEPHAIPPELLLKAYRAGIFPMADSRDDPEVFWVEPKMRAILPLEGFHLSRSLARTLRRGKFTVTCNAAFEAVIDACAAPRPGAEESWISARIRESYIGLHEHGHAHSIECWHNGRLVGGLYGVGFARVFCGESMFSREPDASKVALAWLVASLRKVGAELLDCQFTTPHLASLGAVEIPQSQYLQLLSKAQRPYSSGELAAARALADAVGDGLGIGGAGVVKGDAAALGLPAGFAALRAEGAGSSSPGNVIAQSLTHTS</sequence>
<name>LFTR_NOVAD</name>
<accession>Q2GA52</accession>
<dbReference type="EC" id="2.3.2.6" evidence="1"/>
<dbReference type="EMBL" id="CP000248">
    <property type="protein sequence ID" value="ABD25271.1"/>
    <property type="molecule type" value="Genomic_DNA"/>
</dbReference>
<dbReference type="RefSeq" id="WP_011444485.1">
    <property type="nucleotide sequence ID" value="NC_007794.1"/>
</dbReference>
<dbReference type="SMR" id="Q2GA52"/>
<dbReference type="STRING" id="279238.Saro_0826"/>
<dbReference type="KEGG" id="nar:Saro_0826"/>
<dbReference type="eggNOG" id="COG2360">
    <property type="taxonomic scope" value="Bacteria"/>
</dbReference>
<dbReference type="HOGENOM" id="CLU_075045_1_0_5"/>
<dbReference type="Proteomes" id="UP000009134">
    <property type="component" value="Chromosome"/>
</dbReference>
<dbReference type="GO" id="GO:0005737">
    <property type="term" value="C:cytoplasm"/>
    <property type="evidence" value="ECO:0007669"/>
    <property type="project" value="UniProtKB-SubCell"/>
</dbReference>
<dbReference type="GO" id="GO:0008914">
    <property type="term" value="F:leucyl-tRNA--protein transferase activity"/>
    <property type="evidence" value="ECO:0007669"/>
    <property type="project" value="UniProtKB-UniRule"/>
</dbReference>
<dbReference type="GO" id="GO:0030163">
    <property type="term" value="P:protein catabolic process"/>
    <property type="evidence" value="ECO:0007669"/>
    <property type="project" value="UniProtKB-UniRule"/>
</dbReference>
<dbReference type="FunFam" id="3.40.630.70:FF:000001">
    <property type="entry name" value="Leucyl/phenylalanyl-tRNA--protein transferase"/>
    <property type="match status" value="1"/>
</dbReference>
<dbReference type="Gene3D" id="3.40.630.70">
    <property type="entry name" value="Leucyl/phenylalanyl-tRNA-protein transferase, C-terminal domain"/>
    <property type="match status" value="1"/>
</dbReference>
<dbReference type="Gene3D" id="3.30.70.3550">
    <property type="entry name" value="Leucyl/phenylalanyl-tRNA-protein transferase, N-terminal domain"/>
    <property type="match status" value="1"/>
</dbReference>
<dbReference type="HAMAP" id="MF_00688">
    <property type="entry name" value="Leu_Phe_trans"/>
    <property type="match status" value="1"/>
</dbReference>
<dbReference type="InterPro" id="IPR016181">
    <property type="entry name" value="Acyl_CoA_acyltransferase"/>
</dbReference>
<dbReference type="InterPro" id="IPR004616">
    <property type="entry name" value="Leu/Phe-tRNA_Trfase"/>
</dbReference>
<dbReference type="InterPro" id="IPR042203">
    <property type="entry name" value="Leu/Phe-tRNA_Trfase_C"/>
</dbReference>
<dbReference type="InterPro" id="IPR042221">
    <property type="entry name" value="Leu/Phe-tRNA_Trfase_N"/>
</dbReference>
<dbReference type="NCBIfam" id="TIGR00667">
    <property type="entry name" value="aat"/>
    <property type="match status" value="1"/>
</dbReference>
<dbReference type="PANTHER" id="PTHR30098">
    <property type="entry name" value="LEUCYL/PHENYLALANYL-TRNA--PROTEIN TRANSFERASE"/>
    <property type="match status" value="1"/>
</dbReference>
<dbReference type="PANTHER" id="PTHR30098:SF2">
    <property type="entry name" value="LEUCYL_PHENYLALANYL-TRNA--PROTEIN TRANSFERASE"/>
    <property type="match status" value="1"/>
</dbReference>
<dbReference type="Pfam" id="PF03588">
    <property type="entry name" value="Leu_Phe_trans"/>
    <property type="match status" value="1"/>
</dbReference>
<dbReference type="SUPFAM" id="SSF55729">
    <property type="entry name" value="Acyl-CoA N-acyltransferases (Nat)"/>
    <property type="match status" value="1"/>
</dbReference>
<evidence type="ECO:0000255" key="1">
    <source>
        <dbReference type="HAMAP-Rule" id="MF_00688"/>
    </source>
</evidence>
<proteinExistence type="inferred from homology"/>
<reference key="1">
    <citation type="submission" date="2006-01" db="EMBL/GenBank/DDBJ databases">
        <title>Complete sequence of Novosphingobium aromaticivorans DSM 12444.</title>
        <authorList>
            <consortium name="US DOE Joint Genome Institute"/>
            <person name="Copeland A."/>
            <person name="Lucas S."/>
            <person name="Lapidus A."/>
            <person name="Barry K."/>
            <person name="Detter J.C."/>
            <person name="Glavina T."/>
            <person name="Hammon N."/>
            <person name="Israni S."/>
            <person name="Pitluck S."/>
            <person name="Chain P."/>
            <person name="Malfatti S."/>
            <person name="Shin M."/>
            <person name="Vergez L."/>
            <person name="Schmutz J."/>
            <person name="Larimer F."/>
            <person name="Land M."/>
            <person name="Kyrpides N."/>
            <person name="Ivanova N."/>
            <person name="Fredrickson J."/>
            <person name="Balkwill D."/>
            <person name="Romine M.F."/>
            <person name="Richardson P."/>
        </authorList>
    </citation>
    <scope>NUCLEOTIDE SEQUENCE [LARGE SCALE GENOMIC DNA]</scope>
    <source>
        <strain>ATCC 700278 / DSM 12444 / CCUG 56034 / CIP 105152 / NBRC 16084 / F199</strain>
    </source>
</reference>
<protein>
    <recommendedName>
        <fullName evidence="1">Leucyl/phenylalanyl-tRNA--protein transferase</fullName>
        <ecNumber evidence="1">2.3.2.6</ecNumber>
    </recommendedName>
    <alternativeName>
        <fullName evidence="1">L/F-transferase</fullName>
    </alternativeName>
    <alternativeName>
        <fullName evidence="1">Leucyltransferase</fullName>
    </alternativeName>
    <alternativeName>
        <fullName evidence="1">Phenyalanyltransferase</fullName>
    </alternativeName>
</protein>